<evidence type="ECO:0000256" key="1">
    <source>
        <dbReference type="SAM" id="MobiDB-lite"/>
    </source>
</evidence>
<evidence type="ECO:0000305" key="2"/>
<name>MOK12_SCHPO</name>
<dbReference type="EC" id="2.4.1.183"/>
<dbReference type="EMBL" id="AB018381">
    <property type="protein sequence ID" value="BAA76558.1"/>
    <property type="molecule type" value="Genomic_DNA"/>
</dbReference>
<dbReference type="EMBL" id="AB004534">
    <property type="protein sequence ID" value="BAA21388.1"/>
    <property type="status" value="ALT_INIT"/>
    <property type="molecule type" value="Genomic_DNA"/>
</dbReference>
<dbReference type="EMBL" id="CU329671">
    <property type="protein sequence ID" value="CAC37503.1"/>
    <property type="molecule type" value="Genomic_DNA"/>
</dbReference>
<dbReference type="PIR" id="T43431">
    <property type="entry name" value="T43431"/>
</dbReference>
<dbReference type="RefSeq" id="NP_595619.1">
    <property type="nucleotide sequence ID" value="NM_001021514.2"/>
</dbReference>
<dbReference type="SMR" id="Q9UUL4"/>
<dbReference type="BioGRID" id="276775">
    <property type="interactions" value="3"/>
</dbReference>
<dbReference type="FunCoup" id="Q9UUL4">
    <property type="interactions" value="6"/>
</dbReference>
<dbReference type="STRING" id="284812.Q9UUL4"/>
<dbReference type="CAZy" id="GH13">
    <property type="family name" value="Glycoside Hydrolase Family 13"/>
</dbReference>
<dbReference type="CAZy" id="GT5">
    <property type="family name" value="Glycosyltransferase Family 5"/>
</dbReference>
<dbReference type="PaxDb" id="4896-SPBC32H8.13c.1"/>
<dbReference type="EnsemblFungi" id="SPBC32H8.13c.1">
    <property type="protein sequence ID" value="SPBC32H8.13c.1:pep"/>
    <property type="gene ID" value="SPBC32H8.13c"/>
</dbReference>
<dbReference type="GeneID" id="2540243"/>
<dbReference type="KEGG" id="spo:2540243"/>
<dbReference type="PomBase" id="SPBC32H8.13c">
    <property type="gene designation" value="mok12"/>
</dbReference>
<dbReference type="VEuPathDB" id="FungiDB:SPBC32H8.13c"/>
<dbReference type="eggNOG" id="ENOG502QQX3">
    <property type="taxonomic scope" value="Eukaryota"/>
</dbReference>
<dbReference type="HOGENOM" id="CLU_000488_0_0_1"/>
<dbReference type="InParanoid" id="Q9UUL4"/>
<dbReference type="OMA" id="NQDIFRW"/>
<dbReference type="PhylomeDB" id="Q9UUL4"/>
<dbReference type="PRO" id="PR:Q9UUL4"/>
<dbReference type="Proteomes" id="UP000002485">
    <property type="component" value="Chromosome II"/>
</dbReference>
<dbReference type="GO" id="GO:0005619">
    <property type="term" value="C:ascospore wall"/>
    <property type="evidence" value="ECO:0000314"/>
    <property type="project" value="PomBase"/>
</dbReference>
<dbReference type="GO" id="GO:0071944">
    <property type="term" value="C:cell periphery"/>
    <property type="evidence" value="ECO:0000314"/>
    <property type="project" value="PomBase"/>
</dbReference>
<dbReference type="GO" id="GO:0009277">
    <property type="term" value="C:fungal-type cell wall"/>
    <property type="evidence" value="ECO:0000318"/>
    <property type="project" value="GO_Central"/>
</dbReference>
<dbReference type="GO" id="GO:0047657">
    <property type="term" value="F:alpha-1,3-glucan synthase activity"/>
    <property type="evidence" value="ECO:0000315"/>
    <property type="project" value="PomBase"/>
</dbReference>
<dbReference type="GO" id="GO:0070591">
    <property type="term" value="P:ascospore wall biogenesis"/>
    <property type="evidence" value="ECO:0000315"/>
    <property type="project" value="PomBase"/>
</dbReference>
<dbReference type="GO" id="GO:0071555">
    <property type="term" value="P:cell wall organization"/>
    <property type="evidence" value="ECO:0007669"/>
    <property type="project" value="UniProtKB-KW"/>
</dbReference>
<dbReference type="GO" id="GO:0070600">
    <property type="term" value="P:fungal-type cell wall (1-&gt;3)-alpha-glucan biosynthetic process"/>
    <property type="evidence" value="ECO:0000318"/>
    <property type="project" value="GO_Central"/>
</dbReference>
<dbReference type="CDD" id="cd03791">
    <property type="entry name" value="GT5_Glycogen_synthase_DULL1-like"/>
    <property type="match status" value="1"/>
</dbReference>
<dbReference type="FunFam" id="3.20.20.80:FF:000114">
    <property type="entry name" value="Cell wall alpha-1,3-glucan synthase ags1"/>
    <property type="match status" value="1"/>
</dbReference>
<dbReference type="FunFam" id="3.20.20.80:FF:000162">
    <property type="entry name" value="Cell wall alpha-1,3-glucan synthase mok12"/>
    <property type="match status" value="1"/>
</dbReference>
<dbReference type="Gene3D" id="3.40.50.2000">
    <property type="entry name" value="Glycogen Phosphorylase B"/>
    <property type="match status" value="2"/>
</dbReference>
<dbReference type="Gene3D" id="3.20.20.80">
    <property type="entry name" value="Glycosidases"/>
    <property type="match status" value="2"/>
</dbReference>
<dbReference type="InterPro" id="IPR006047">
    <property type="entry name" value="Glyco_hydro_13_cat_dom"/>
</dbReference>
<dbReference type="InterPro" id="IPR001296">
    <property type="entry name" value="Glyco_trans_1"/>
</dbReference>
<dbReference type="InterPro" id="IPR017853">
    <property type="entry name" value="Glycoside_hydrolase_SF"/>
</dbReference>
<dbReference type="InterPro" id="IPR013534">
    <property type="entry name" value="Starch_synth_cat_dom"/>
</dbReference>
<dbReference type="PANTHER" id="PTHR47182">
    <property type="entry name" value="CELL WALL ALPHA-1,3-GLUCAN SYNTHASE AGS1-RELATED"/>
    <property type="match status" value="1"/>
</dbReference>
<dbReference type="PANTHER" id="PTHR47182:SF5">
    <property type="entry name" value="CELL WALL ALPHA-1,3-GLUCAN SYNTHASE MOK12"/>
    <property type="match status" value="1"/>
</dbReference>
<dbReference type="Pfam" id="PF00128">
    <property type="entry name" value="Alpha-amylase"/>
    <property type="match status" value="1"/>
</dbReference>
<dbReference type="Pfam" id="PF08323">
    <property type="entry name" value="Glyco_transf_5"/>
    <property type="match status" value="1"/>
</dbReference>
<dbReference type="Pfam" id="PF00534">
    <property type="entry name" value="Glycos_transf_1"/>
    <property type="match status" value="1"/>
</dbReference>
<dbReference type="SMART" id="SM00642">
    <property type="entry name" value="Aamy"/>
    <property type="match status" value="1"/>
</dbReference>
<dbReference type="SUPFAM" id="SSF51445">
    <property type="entry name" value="(Trans)glycosidases"/>
    <property type="match status" value="1"/>
</dbReference>
<dbReference type="SUPFAM" id="SSF53756">
    <property type="entry name" value="UDP-Glycosyltransferase/glycogen phosphorylase"/>
    <property type="match status" value="1"/>
</dbReference>
<proteinExistence type="inferred from homology"/>
<keyword id="KW-0961">Cell wall biogenesis/degradation</keyword>
<keyword id="KW-0328">Glycosyltransferase</keyword>
<keyword id="KW-1185">Reference proteome</keyword>
<keyword id="KW-0808">Transferase</keyword>
<comment type="catalytic activity">
    <reaction>
        <text>[(1-&gt;3)-alpha-D-glucosyl](n) + UDP-alpha-D-glucose = [(1-&gt;3)-alpha-D-glucosyl](n+1) + UDP + H(+)</text>
        <dbReference type="Rhea" id="RHEA:19749"/>
        <dbReference type="Rhea" id="RHEA-COMP:11150"/>
        <dbReference type="Rhea" id="RHEA-COMP:11151"/>
        <dbReference type="ChEBI" id="CHEBI:15378"/>
        <dbReference type="ChEBI" id="CHEBI:28100"/>
        <dbReference type="ChEBI" id="CHEBI:58223"/>
        <dbReference type="ChEBI" id="CHEBI:58885"/>
        <dbReference type="EC" id="2.4.1.183"/>
    </reaction>
</comment>
<comment type="similarity">
    <text evidence="2">Belongs to the glycosyltransferase group 1 family.</text>
</comment>
<comment type="sequence caution" evidence="2">
    <conflict type="erroneous initiation">
        <sequence resource="EMBL-CDS" id="BAA21388"/>
    </conflict>
</comment>
<organism>
    <name type="scientific">Schizosaccharomyces pombe (strain 972 / ATCC 24843)</name>
    <name type="common">Fission yeast</name>
    <dbReference type="NCBI Taxonomy" id="284812"/>
    <lineage>
        <taxon>Eukaryota</taxon>
        <taxon>Fungi</taxon>
        <taxon>Dikarya</taxon>
        <taxon>Ascomycota</taxon>
        <taxon>Taphrinomycotina</taxon>
        <taxon>Schizosaccharomycetes</taxon>
        <taxon>Schizosaccharomycetales</taxon>
        <taxon>Schizosaccharomycetaceae</taxon>
        <taxon>Schizosaccharomyces</taxon>
    </lineage>
</organism>
<sequence>MLFFSIPTILLIFFLFIQIITAAFLTDENEPWNLNRNWTAQKILDYSAEWNSHEYFPSPSNWRALPFYTIILDKWTNGVPENDVAEDTVFESDPYEVTFRAGGDIVGLVTPRSLDYLESMGIKAVYIAGTPFQNLPWYPDGYSPLDFTLLDKHTGTLNQWHEAIMKLHERGFYVVVDFTISTLSELSYFVNSSMSFANTSAPFSTKGYKMKYKHPEYHYTDFQLSNGSSYSCNAPTFWDVTGLPINNTEDLNSISEVMCLSGDFDHYGDVEAFGNHPPWWRQLSNFASVQDRLRDWDPIVAKKLKHLGCLAVKMLDIDGIRVDKATQITADFLGDWSAYIRQCAREIGKENFFIPGEVTSGADFGSIYVGRGRQADQRPNNREIALQTGYNESKYFLRKESDSALDSVSFHYSVYRTLTLLLGLQGELFAAFDLNRHDFAAMWNQMLIQDDMINANTKKFDPRHLYGLTNQDIFRWPSIKDGRFKQLLGLFVVHLLMPGIPLIYYGEEQNLKLLDNQAANYIFGRQPITSSIGWQKHGCYQIGTTQYTDLDFGPASEACRDDWNSLDHLDPTSPTKHYIARMNEIRSYFPQVRDGWDLKLIGKWTHEGTFPGNELYGESNPTTWGLWSMIRGPLAPYQKFSDQNDYIWLIFTNENTTKTYDMDCMRQVDNKFPPYPALLGPYSSGSTVKNLLYPYEEIDLSTSTIDSPDIGNIGCIPHLTIDAYGSKIFVKKEDWIRPSLYLTKFLPGHDSRIYSATEVTSFKISLGFSEEVDCKDLFKRIGFNSRTLNSSFAPKILEDSISCGYLDQPAPQEYTNAPVTKWFFNATLDSVPNGMHELLLNEVKSTSNQTMQSKIARLIFRVGNEENPLVYPNNATFSPSLLYKASNGDLYVNHTGAGADKYRFSLNYGGTYSKWKTVSTPSEKLRKPTWNGTNLQKWDGDHLIVQYWSSIALSTAHVQHGDTLNYSRQFPNLFVQGAFNRFGYDGSMPSKMSYNLENRTWSYDLISTWPAELVLNVWGMNPDNNADQGWVYGDLDNDTIIDRVPPGSSRISNFIRFLDPPPKPYLSYKMYLNDFTRQLHYIPKGSWTVQIVAIVLLILLPPLFGIFSVALYSGAFSRVTIFNGSHNRGIKVAKQKIKSIMSRIFPFSVHLPLDNSSELLKQLPESEKRLNVLVATLEYDVPDLGIRVKIGGLGVMAQLMGQHMEFQDMVWVVPIISGVEYPFDKLCTEPKIAVKIGDDEFVVNCYSYKSGNITYVFLQSEVFYKQSSKEPYPLKMDDLASAIFYSVWNQCIAEVWKRFPLDIYHVNDYHGALAPLYLLPEVIPVAVSLHNAEFQGLWPLRTSAELECVCSIFNIEKDICTKYVQFGHVFNLLHSIISYVRKHQGGYGVVAVSDKYSKQTLSRYPIFWSLVHISGLPNPDPSDLKLLNHLTDDPVDVDFVLEAKRKLLKKQTQEWANLDVDPSAQLLVFVGRWSHQKGIDLIADLAPKLLTEHNVQLITIGPVIDLHGQFAAEKLEQIAKRFPTRVLCKPVFTAVPPFLFAGTDFALIPSRDEPFGLVAVEFGRKGVLCIGSRTGGLGHMPGWWFQMASPNTGHLLTQFENAITKALHSNGELRARLRVEALRQRFPVCIWKQKSENLLKSCIYVHEMETLKHASPTFKAYQFVVRICHYLTSKVKSINKDQVFNAFSPDVSERPPLFEVASCSNETDSVEKLTPELSVSPESDMHFKDGNSSKLEIVESKEIYASDSDISNSTSEDINKDECVSKDIEVDNFALNLQSQSYEGDSNDFGIREVPLSDANQSSQADSTSIDRYGPYSSQKVNFSKYKDFVESRPTFFQSSVTFTDADGSTRKTFSKRLENLTTSNTLKSLSVDHFIRKHERKYFNGLRKQEIDVKLKSRSDKEKSCTVSESYKQIDCDTYEATRLQKLLLHSIGGWPLYTIVLAIGQILGASSYQLTLLSGESAQSTVSMYILLSIFSFFSLFWWFLSRVVQARYILSLPFFFFGISFILVAITHFFQKTTACSVIQHIAAYVYAISSSTGSLYFAWNFGAEGGIATHHWILRACLVHGIQQIWSAILWSWGDLLSKKDLTQNVGPGIFAGGLIASFICFGLSYVTFAGLPAFYRQAPSIIPAFYRSLGKRNIVIWFFISQILINYWLAVPYGQAWRFFWNTSNTPLWSIIILLLIFFIVVWAVLLSVIKILSLNNVWFPVIFGLGLICPRWCLEFWSSSGLGINLPWAGKASALLTKSVWLLLALWDGIQGVGVGVMLLQTLARDHVAFTLMLAQVISCITIMIAKPSLPVSDRVFPNLGAWNPSEGPGPCASPCFYIALICQFVAVGGLLYHYRKSQLAL</sequence>
<reference key="1">
    <citation type="journal article" date="1999" name="J. Cell Biol.">
        <title>Fission yeast alpha-glucan synthase Mok1 requires the actin cytoskeleton to localize the sites of growth and plays an essential role in cell morphogenesis downstream of protein kinase C function.</title>
        <authorList>
            <person name="Katayama S."/>
            <person name="Hirata D."/>
            <person name="Arellano M."/>
            <person name="Perez P."/>
            <person name="Toda T."/>
        </authorList>
    </citation>
    <scope>NUCLEOTIDE SEQUENCE [GENOMIC DNA]</scope>
    <source>
        <strain>972 / ATCC 24843</strain>
    </source>
</reference>
<reference key="2">
    <citation type="journal article" date="2000" name="Yeast">
        <title>A 38 kb segment containing the cdc2 gene from the left arm of fission yeast chromosome II: sequence analysis and characterization of the genomic DNA and cDNAs encoded on the segment.</title>
        <authorList>
            <person name="Machida M."/>
            <person name="Yamazaki S."/>
            <person name="Kunihiro S."/>
            <person name="Tanaka T."/>
            <person name="Kushida N."/>
            <person name="Jinno K."/>
            <person name="Haikawa Y."/>
            <person name="Yamazaki J."/>
            <person name="Yamamoto S."/>
            <person name="Sekine M."/>
            <person name="Oguchi A."/>
            <person name="Nagai Y."/>
            <person name="Sakai M."/>
            <person name="Aoki K."/>
            <person name="Ogura K."/>
            <person name="Kudoh Y."/>
            <person name="Kikuchi H."/>
            <person name="Zhang M.Q."/>
            <person name="Yanagida M."/>
        </authorList>
    </citation>
    <scope>NUCLEOTIDE SEQUENCE [LARGE SCALE GENOMIC DNA]</scope>
    <source>
        <strain>972 / ATCC 24843</strain>
    </source>
</reference>
<reference key="3">
    <citation type="journal article" date="2002" name="Nature">
        <title>The genome sequence of Schizosaccharomyces pombe.</title>
        <authorList>
            <person name="Wood V."/>
            <person name="Gwilliam R."/>
            <person name="Rajandream M.A."/>
            <person name="Lyne M.H."/>
            <person name="Lyne R."/>
            <person name="Stewart A."/>
            <person name="Sgouros J.G."/>
            <person name="Peat N."/>
            <person name="Hayles J."/>
            <person name="Baker S.G."/>
            <person name="Basham D."/>
            <person name="Bowman S."/>
            <person name="Brooks K."/>
            <person name="Brown D."/>
            <person name="Brown S."/>
            <person name="Chillingworth T."/>
            <person name="Churcher C.M."/>
            <person name="Collins M."/>
            <person name="Connor R."/>
            <person name="Cronin A."/>
            <person name="Davis P."/>
            <person name="Feltwell T."/>
            <person name="Fraser A."/>
            <person name="Gentles S."/>
            <person name="Goble A."/>
            <person name="Hamlin N."/>
            <person name="Harris D.E."/>
            <person name="Hidalgo J."/>
            <person name="Hodgson G."/>
            <person name="Holroyd S."/>
            <person name="Hornsby T."/>
            <person name="Howarth S."/>
            <person name="Huckle E.J."/>
            <person name="Hunt S."/>
            <person name="Jagels K."/>
            <person name="James K.D."/>
            <person name="Jones L."/>
            <person name="Jones M."/>
            <person name="Leather S."/>
            <person name="McDonald S."/>
            <person name="McLean J."/>
            <person name="Mooney P."/>
            <person name="Moule S."/>
            <person name="Mungall K.L."/>
            <person name="Murphy L.D."/>
            <person name="Niblett D."/>
            <person name="Odell C."/>
            <person name="Oliver K."/>
            <person name="O'Neil S."/>
            <person name="Pearson D."/>
            <person name="Quail M.A."/>
            <person name="Rabbinowitsch E."/>
            <person name="Rutherford K.M."/>
            <person name="Rutter S."/>
            <person name="Saunders D."/>
            <person name="Seeger K."/>
            <person name="Sharp S."/>
            <person name="Skelton J."/>
            <person name="Simmonds M.N."/>
            <person name="Squares R."/>
            <person name="Squares S."/>
            <person name="Stevens K."/>
            <person name="Taylor K."/>
            <person name="Taylor R.G."/>
            <person name="Tivey A."/>
            <person name="Walsh S.V."/>
            <person name="Warren T."/>
            <person name="Whitehead S."/>
            <person name="Woodward J.R."/>
            <person name="Volckaert G."/>
            <person name="Aert R."/>
            <person name="Robben J."/>
            <person name="Grymonprez B."/>
            <person name="Weltjens I."/>
            <person name="Vanstreels E."/>
            <person name="Rieger M."/>
            <person name="Schaefer M."/>
            <person name="Mueller-Auer S."/>
            <person name="Gabel C."/>
            <person name="Fuchs M."/>
            <person name="Duesterhoeft A."/>
            <person name="Fritzc C."/>
            <person name="Holzer E."/>
            <person name="Moestl D."/>
            <person name="Hilbert H."/>
            <person name="Borzym K."/>
            <person name="Langer I."/>
            <person name="Beck A."/>
            <person name="Lehrach H."/>
            <person name="Reinhardt R."/>
            <person name="Pohl T.M."/>
            <person name="Eger P."/>
            <person name="Zimmermann W."/>
            <person name="Wedler H."/>
            <person name="Wambutt R."/>
            <person name="Purnelle B."/>
            <person name="Goffeau A."/>
            <person name="Cadieu E."/>
            <person name="Dreano S."/>
            <person name="Gloux S."/>
            <person name="Lelaure V."/>
            <person name="Mottier S."/>
            <person name="Galibert F."/>
            <person name="Aves S.J."/>
            <person name="Xiang Z."/>
            <person name="Hunt C."/>
            <person name="Moore K."/>
            <person name="Hurst S.M."/>
            <person name="Lucas M."/>
            <person name="Rochet M."/>
            <person name="Gaillardin C."/>
            <person name="Tallada V.A."/>
            <person name="Garzon A."/>
            <person name="Thode G."/>
            <person name="Daga R.R."/>
            <person name="Cruzado L."/>
            <person name="Jimenez J."/>
            <person name="Sanchez M."/>
            <person name="del Rey F."/>
            <person name="Benito J."/>
            <person name="Dominguez A."/>
            <person name="Revuelta J.L."/>
            <person name="Moreno S."/>
            <person name="Armstrong J."/>
            <person name="Forsburg S.L."/>
            <person name="Cerutti L."/>
            <person name="Lowe T."/>
            <person name="McCombie W.R."/>
            <person name="Paulsen I."/>
            <person name="Potashkin J."/>
            <person name="Shpakovski G.V."/>
            <person name="Ussery D."/>
            <person name="Barrell B.G."/>
            <person name="Nurse P."/>
        </authorList>
    </citation>
    <scope>NUCLEOTIDE SEQUENCE [LARGE SCALE GENOMIC DNA]</scope>
    <source>
        <strain>972 / ATCC 24843</strain>
    </source>
</reference>
<gene>
    <name type="primary">mok12</name>
    <name type="ORF">pi011</name>
    <name type="ORF">SPBC32H8.13c</name>
</gene>
<accession>Q9UUL4</accession>
<accession>O13605</accession>
<protein>
    <recommendedName>
        <fullName>Cell wall alpha-1,3-glucan synthase mok12</fullName>
        <ecNumber>2.4.1.183</ecNumber>
    </recommendedName>
</protein>
<feature type="chain" id="PRO_0000080330" description="Cell wall alpha-1,3-glucan synthase mok12">
    <location>
        <begin position="1"/>
        <end position="2352"/>
    </location>
</feature>
<feature type="region of interest" description="Disordered" evidence="1">
    <location>
        <begin position="1786"/>
        <end position="1813"/>
    </location>
</feature>
<feature type="compositionally biased region" description="Polar residues" evidence="1">
    <location>
        <begin position="1798"/>
        <end position="1813"/>
    </location>
</feature>